<reference key="1">
    <citation type="journal article" date="2004" name="Nat. Genet.">
        <title>Complete sequencing and characterization of 21,243 full-length human cDNAs.</title>
        <authorList>
            <person name="Ota T."/>
            <person name="Suzuki Y."/>
            <person name="Nishikawa T."/>
            <person name="Otsuki T."/>
            <person name="Sugiyama T."/>
            <person name="Irie R."/>
            <person name="Wakamatsu A."/>
            <person name="Hayashi K."/>
            <person name="Sato H."/>
            <person name="Nagai K."/>
            <person name="Kimura K."/>
            <person name="Makita H."/>
            <person name="Sekine M."/>
            <person name="Obayashi M."/>
            <person name="Nishi T."/>
            <person name="Shibahara T."/>
            <person name="Tanaka T."/>
            <person name="Ishii S."/>
            <person name="Yamamoto J."/>
            <person name="Saito K."/>
            <person name="Kawai Y."/>
            <person name="Isono Y."/>
            <person name="Nakamura Y."/>
            <person name="Nagahari K."/>
            <person name="Murakami K."/>
            <person name="Yasuda T."/>
            <person name="Iwayanagi T."/>
            <person name="Wagatsuma M."/>
            <person name="Shiratori A."/>
            <person name="Sudo H."/>
            <person name="Hosoiri T."/>
            <person name="Kaku Y."/>
            <person name="Kodaira H."/>
            <person name="Kondo H."/>
            <person name="Sugawara M."/>
            <person name="Takahashi M."/>
            <person name="Kanda K."/>
            <person name="Yokoi T."/>
            <person name="Furuya T."/>
            <person name="Kikkawa E."/>
            <person name="Omura Y."/>
            <person name="Abe K."/>
            <person name="Kamihara K."/>
            <person name="Katsuta N."/>
            <person name="Sato K."/>
            <person name="Tanikawa M."/>
            <person name="Yamazaki M."/>
            <person name="Ninomiya K."/>
            <person name="Ishibashi T."/>
            <person name="Yamashita H."/>
            <person name="Murakawa K."/>
            <person name="Fujimori K."/>
            <person name="Tanai H."/>
            <person name="Kimata M."/>
            <person name="Watanabe M."/>
            <person name="Hiraoka S."/>
            <person name="Chiba Y."/>
            <person name="Ishida S."/>
            <person name="Ono Y."/>
            <person name="Takiguchi S."/>
            <person name="Watanabe S."/>
            <person name="Yosida M."/>
            <person name="Hotuta T."/>
            <person name="Kusano J."/>
            <person name="Kanehori K."/>
            <person name="Takahashi-Fujii A."/>
            <person name="Hara H."/>
            <person name="Tanase T.-O."/>
            <person name="Nomura Y."/>
            <person name="Togiya S."/>
            <person name="Komai F."/>
            <person name="Hara R."/>
            <person name="Takeuchi K."/>
            <person name="Arita M."/>
            <person name="Imose N."/>
            <person name="Musashino K."/>
            <person name="Yuuki H."/>
            <person name="Oshima A."/>
            <person name="Sasaki N."/>
            <person name="Aotsuka S."/>
            <person name="Yoshikawa Y."/>
            <person name="Matsunawa H."/>
            <person name="Ichihara T."/>
            <person name="Shiohata N."/>
            <person name="Sano S."/>
            <person name="Moriya S."/>
            <person name="Momiyama H."/>
            <person name="Satoh N."/>
            <person name="Takami S."/>
            <person name="Terashima Y."/>
            <person name="Suzuki O."/>
            <person name="Nakagawa S."/>
            <person name="Senoh A."/>
            <person name="Mizoguchi H."/>
            <person name="Goto Y."/>
            <person name="Shimizu F."/>
            <person name="Wakebe H."/>
            <person name="Hishigaki H."/>
            <person name="Watanabe T."/>
            <person name="Sugiyama A."/>
            <person name="Takemoto M."/>
            <person name="Kawakami B."/>
            <person name="Yamazaki M."/>
            <person name="Watanabe K."/>
            <person name="Kumagai A."/>
            <person name="Itakura S."/>
            <person name="Fukuzumi Y."/>
            <person name="Fujimori Y."/>
            <person name="Komiyama M."/>
            <person name="Tashiro H."/>
            <person name="Tanigami A."/>
            <person name="Fujiwara T."/>
            <person name="Ono T."/>
            <person name="Yamada K."/>
            <person name="Fujii Y."/>
            <person name="Ozaki K."/>
            <person name="Hirao M."/>
            <person name="Ohmori Y."/>
            <person name="Kawabata A."/>
            <person name="Hikiji T."/>
            <person name="Kobatake N."/>
            <person name="Inagaki H."/>
            <person name="Ikema Y."/>
            <person name="Okamoto S."/>
            <person name="Okitani R."/>
            <person name="Kawakami T."/>
            <person name="Noguchi S."/>
            <person name="Itoh T."/>
            <person name="Shigeta K."/>
            <person name="Senba T."/>
            <person name="Matsumura K."/>
            <person name="Nakajima Y."/>
            <person name="Mizuno T."/>
            <person name="Morinaga M."/>
            <person name="Sasaki M."/>
            <person name="Togashi T."/>
            <person name="Oyama M."/>
            <person name="Hata H."/>
            <person name="Watanabe M."/>
            <person name="Komatsu T."/>
            <person name="Mizushima-Sugano J."/>
            <person name="Satoh T."/>
            <person name="Shirai Y."/>
            <person name="Takahashi Y."/>
            <person name="Nakagawa K."/>
            <person name="Okumura K."/>
            <person name="Nagase T."/>
            <person name="Nomura N."/>
            <person name="Kikuchi H."/>
            <person name="Masuho Y."/>
            <person name="Yamashita R."/>
            <person name="Nakai K."/>
            <person name="Yada T."/>
            <person name="Nakamura Y."/>
            <person name="Ohara O."/>
            <person name="Isogai T."/>
            <person name="Sugano S."/>
        </authorList>
    </citation>
    <scope>NUCLEOTIDE SEQUENCE [LARGE SCALE MRNA] (ISOFORMS 1 AND 2)</scope>
    <source>
        <tissue>Adipose tissue</tissue>
        <tissue>Kidney epithelium</tissue>
        <tissue>Testis</tissue>
    </source>
</reference>
<reference key="2">
    <citation type="journal article" date="2004" name="Nature">
        <title>The DNA sequence and comparative analysis of human chromosome 10.</title>
        <authorList>
            <person name="Deloukas P."/>
            <person name="Earthrowl M.E."/>
            <person name="Grafham D.V."/>
            <person name="Rubenfield M."/>
            <person name="French L."/>
            <person name="Steward C.A."/>
            <person name="Sims S.K."/>
            <person name="Jones M.C."/>
            <person name="Searle S."/>
            <person name="Scott C."/>
            <person name="Howe K."/>
            <person name="Hunt S.E."/>
            <person name="Andrews T.D."/>
            <person name="Gilbert J.G.R."/>
            <person name="Swarbreck D."/>
            <person name="Ashurst J.L."/>
            <person name="Taylor A."/>
            <person name="Battles J."/>
            <person name="Bird C.P."/>
            <person name="Ainscough R."/>
            <person name="Almeida J.P."/>
            <person name="Ashwell R.I.S."/>
            <person name="Ambrose K.D."/>
            <person name="Babbage A.K."/>
            <person name="Bagguley C.L."/>
            <person name="Bailey J."/>
            <person name="Banerjee R."/>
            <person name="Bates K."/>
            <person name="Beasley H."/>
            <person name="Bray-Allen S."/>
            <person name="Brown A.J."/>
            <person name="Brown J.Y."/>
            <person name="Burford D.C."/>
            <person name="Burrill W."/>
            <person name="Burton J."/>
            <person name="Cahill P."/>
            <person name="Camire D."/>
            <person name="Carter N.P."/>
            <person name="Chapman J.C."/>
            <person name="Clark S.Y."/>
            <person name="Clarke G."/>
            <person name="Clee C.M."/>
            <person name="Clegg S."/>
            <person name="Corby N."/>
            <person name="Coulson A."/>
            <person name="Dhami P."/>
            <person name="Dutta I."/>
            <person name="Dunn M."/>
            <person name="Faulkner L."/>
            <person name="Frankish A."/>
            <person name="Frankland J.A."/>
            <person name="Garner P."/>
            <person name="Garnett J."/>
            <person name="Gribble S."/>
            <person name="Griffiths C."/>
            <person name="Grocock R."/>
            <person name="Gustafson E."/>
            <person name="Hammond S."/>
            <person name="Harley J.L."/>
            <person name="Hart E."/>
            <person name="Heath P.D."/>
            <person name="Ho T.P."/>
            <person name="Hopkins B."/>
            <person name="Horne J."/>
            <person name="Howden P.J."/>
            <person name="Huckle E."/>
            <person name="Hynds C."/>
            <person name="Johnson C."/>
            <person name="Johnson D."/>
            <person name="Kana A."/>
            <person name="Kay M."/>
            <person name="Kimberley A.M."/>
            <person name="Kershaw J.K."/>
            <person name="Kokkinaki M."/>
            <person name="Laird G.K."/>
            <person name="Lawlor S."/>
            <person name="Lee H.M."/>
            <person name="Leongamornlert D.A."/>
            <person name="Laird G."/>
            <person name="Lloyd C."/>
            <person name="Lloyd D.M."/>
            <person name="Loveland J."/>
            <person name="Lovell J."/>
            <person name="McLaren S."/>
            <person name="McLay K.E."/>
            <person name="McMurray A."/>
            <person name="Mashreghi-Mohammadi M."/>
            <person name="Matthews L."/>
            <person name="Milne S."/>
            <person name="Nickerson T."/>
            <person name="Nguyen M."/>
            <person name="Overton-Larty E."/>
            <person name="Palmer S.A."/>
            <person name="Pearce A.V."/>
            <person name="Peck A.I."/>
            <person name="Pelan S."/>
            <person name="Phillimore B."/>
            <person name="Porter K."/>
            <person name="Rice C.M."/>
            <person name="Rogosin A."/>
            <person name="Ross M.T."/>
            <person name="Sarafidou T."/>
            <person name="Sehra H.K."/>
            <person name="Shownkeen R."/>
            <person name="Skuce C.D."/>
            <person name="Smith M."/>
            <person name="Standring L."/>
            <person name="Sycamore N."/>
            <person name="Tester J."/>
            <person name="Thorpe A."/>
            <person name="Torcasso W."/>
            <person name="Tracey A."/>
            <person name="Tromans A."/>
            <person name="Tsolas J."/>
            <person name="Wall M."/>
            <person name="Walsh J."/>
            <person name="Wang H."/>
            <person name="Weinstock K."/>
            <person name="West A.P."/>
            <person name="Willey D.L."/>
            <person name="Whitehead S.L."/>
            <person name="Wilming L."/>
            <person name="Wray P.W."/>
            <person name="Young L."/>
            <person name="Chen Y."/>
            <person name="Lovering R.C."/>
            <person name="Moschonas N.K."/>
            <person name="Siebert R."/>
            <person name="Fechtel K."/>
            <person name="Bentley D."/>
            <person name="Durbin R.M."/>
            <person name="Hubbard T."/>
            <person name="Doucette-Stamm L."/>
            <person name="Beck S."/>
            <person name="Smith D.R."/>
            <person name="Rogers J."/>
        </authorList>
    </citation>
    <scope>NUCLEOTIDE SEQUENCE [LARGE SCALE GENOMIC DNA]</scope>
</reference>
<reference key="3">
    <citation type="journal article" date="2004" name="Genome Res.">
        <title>The status, quality, and expansion of the NIH full-length cDNA project: the Mammalian Gene Collection (MGC).</title>
        <authorList>
            <consortium name="The MGC Project Team"/>
        </authorList>
    </citation>
    <scope>NUCLEOTIDE SEQUENCE [LARGE SCALE MRNA] (ISOFORM 1)</scope>
    <source>
        <tissue>Colon</tissue>
        <tissue>Pancreas</tissue>
    </source>
</reference>
<reference key="4">
    <citation type="journal article" date="2010" name="Cell Struct. Funct.">
        <title>A novel ER J-protein DNAJB12 accelerates ER-associated degradation of membrane proteins including CFTR.</title>
        <authorList>
            <person name="Yamamoto Y.H."/>
            <person name="Kimura T."/>
            <person name="Momohara S."/>
            <person name="Takeuchi M."/>
            <person name="Tani T."/>
            <person name="Kimata Y."/>
            <person name="Kadokura H."/>
            <person name="Kohno K."/>
        </authorList>
    </citation>
    <scope>FUNCTION</scope>
    <scope>SUBCELLULAR LOCATION</scope>
    <scope>TOPOLOGY</scope>
    <scope>INTERACTION WITH HSPA8</scope>
    <scope>MUTAGENESIS OF HIS-138</scope>
</reference>
<reference key="5">
    <citation type="journal article" date="2011" name="BMC Syst. Biol.">
        <title>Initial characterization of the human central proteome.</title>
        <authorList>
            <person name="Burkard T.R."/>
            <person name="Planyavsky M."/>
            <person name="Kaupe I."/>
            <person name="Breitwieser F.P."/>
            <person name="Buerckstuemmer T."/>
            <person name="Bennett K.L."/>
            <person name="Superti-Furga G."/>
            <person name="Colinge J."/>
        </authorList>
    </citation>
    <scope>IDENTIFICATION BY MASS SPECTROMETRY [LARGE SCALE ANALYSIS]</scope>
</reference>
<reference key="6">
    <citation type="journal article" date="2011" name="MBio">
        <title>BiP and multiple DNAJ molecular chaperones in the endoplasmic reticulum are required for efficient simian virus 40 infection.</title>
        <authorList>
            <person name="Goodwin E.C."/>
            <person name="Lipovsky A."/>
            <person name="Inoue T."/>
            <person name="Magaldi T.G."/>
            <person name="Edwards A.P."/>
            <person name="Van Goor K.E."/>
            <person name="Paton A.W."/>
            <person name="Paton J.C."/>
            <person name="Atwood W.J."/>
            <person name="Tsai B."/>
            <person name="DiMaio D."/>
        </authorList>
    </citation>
    <scope>FUNCTION (MICROBIAL INFECTION)</scope>
</reference>
<reference key="7">
    <citation type="journal article" date="2011" name="Mol. Biol. Cell">
        <title>The endoplasmic reticulum-associated Hsp40 DNAJB12 and Hsc70 cooperate to facilitate RMA1 E3-dependent degradation of nascent CFTRDeltaF508.</title>
        <authorList>
            <person name="Grove D.E."/>
            <person name="Fan C.Y."/>
            <person name="Ren H.Y."/>
            <person name="Cyr D.M."/>
        </authorList>
    </citation>
    <scope>FUNCTION</scope>
    <scope>SUBCELLULAR LOCATION</scope>
    <scope>TOPOLOGY</scope>
    <scope>INTERACTION WITH HSPA8</scope>
    <scope>MUTAGENESIS OF HIS-138</scope>
</reference>
<reference key="8">
    <citation type="journal article" date="2012" name="Proc. Natl. Acad. Sci. U.S.A.">
        <title>N-terminal acetylome analyses and functional insights of the N-terminal acetyltransferase NatB.</title>
        <authorList>
            <person name="Van Damme P."/>
            <person name="Lasa M."/>
            <person name="Polevoda B."/>
            <person name="Gazquez C."/>
            <person name="Elosegui-Artola A."/>
            <person name="Kim D.S."/>
            <person name="De Juan-Pardo E."/>
            <person name="Demeyer K."/>
            <person name="Hole K."/>
            <person name="Larrea E."/>
            <person name="Timmerman E."/>
            <person name="Prieto J."/>
            <person name="Arnesen T."/>
            <person name="Sherman F."/>
            <person name="Gevaert K."/>
            <person name="Aldabe R."/>
        </authorList>
    </citation>
    <scope>ACETYLATION [LARGE SCALE ANALYSIS] AT MET-1</scope>
    <scope>IDENTIFICATION BY MASS SPECTROMETRY [LARGE SCALE ANALYSIS]</scope>
</reference>
<reference key="9">
    <citation type="journal article" date="2014" name="PLoS ONE">
        <title>Expression of DNAJB12 or DNAJB14 causes coordinate invasion of the nucleus by membranes associated with a novel nuclear pore structure.</title>
        <authorList>
            <person name="Goodwin E.C."/>
            <person name="Motamedi N."/>
            <person name="Lipovsky A."/>
            <person name="Fernandez-Busnadiego R."/>
            <person name="DiMaio D."/>
        </authorList>
    </citation>
    <scope>FUNCTION</scope>
    <scope>SUBCELLULAR LOCATION</scope>
    <scope>INTERACTION WITH HSPA8</scope>
    <scope>MUTAGENESIS OF HIS-138</scope>
</reference>
<reference key="10">
    <citation type="journal article" date="2014" name="PLoS Pathog.">
        <title>A cytosolic chaperone complexes with dynamic membrane J-proteins and mobilizes a nonenveloped virus out of the endoplasmic reticulum.</title>
        <authorList>
            <person name="Walczak C.P."/>
            <person name="Ravindran M.S."/>
            <person name="Inoue T."/>
            <person name="Tsai B."/>
        </authorList>
    </citation>
    <scope>FUNCTION (MICROBIAL INFECTION)</scope>
    <scope>IDENTIFICATION IN A COMPLEX WITH DNAJB14</scope>
</reference>
<reference key="11">
    <citation type="journal article" date="2015" name="Proteomics">
        <title>N-terminome analysis of the human mitochondrial proteome.</title>
        <authorList>
            <person name="Vaca Jacome A.S."/>
            <person name="Rabilloud T."/>
            <person name="Schaeffer-Reiss C."/>
            <person name="Rompais M."/>
            <person name="Ayoub D."/>
            <person name="Lane L."/>
            <person name="Bairoch A."/>
            <person name="Van Dorsselaer A."/>
            <person name="Carapito C."/>
        </authorList>
    </citation>
    <scope>IDENTIFICATION BY MASS SPECTROMETRY [LARGE SCALE ANALYSIS]</scope>
</reference>
<reference key="12">
    <citation type="journal article" date="2017" name="Mol. Cell">
        <title>Tetrameric assembly of K(+) channels requires ER-located chaperone proteins.</title>
        <authorList>
            <person name="Li K."/>
            <person name="Jiang Q."/>
            <person name="Bai X."/>
            <person name="Yang Y.F."/>
            <person name="Ruan M.Y."/>
            <person name="Cai S.Q."/>
        </authorList>
    </citation>
    <scope>FUNCTION</scope>
    <scope>SUBUNIT</scope>
    <scope>SUBCELLULAR LOCATION</scope>
    <scope>MUTAGENESIS OF 184-GLY--PHE-212</scope>
</reference>
<reference key="13">
    <citation type="journal article" date="2021" name="Nat. Commun.">
        <title>The methyltransferase METTL9 mediates pervasive 1-methylhistidine modification in mammalian proteomes.</title>
        <authorList>
            <person name="Davydova E."/>
            <person name="Shimazu T."/>
            <person name="Schuhmacher M.K."/>
            <person name="Jakobsson M.E."/>
            <person name="Willemen H.L.D.M."/>
            <person name="Liu T."/>
            <person name="Moen A."/>
            <person name="Ho A.Y.Y."/>
            <person name="Malecki J."/>
            <person name="Schroer L."/>
            <person name="Pinto R."/>
            <person name="Suzuki T."/>
            <person name="Groensberg I.A."/>
            <person name="Sohtome Y."/>
            <person name="Akakabe M."/>
            <person name="Weirich S."/>
            <person name="Kikuchi M."/>
            <person name="Olsen J.V."/>
            <person name="Dohmae N."/>
            <person name="Umehara T."/>
            <person name="Sodeoka M."/>
            <person name="Siino V."/>
            <person name="McDonough M.A."/>
            <person name="Eijkelkamp N."/>
            <person name="Schofield C.J."/>
            <person name="Jeltsch A."/>
            <person name="Shinkai Y."/>
            <person name="Falnes P.O."/>
        </authorList>
    </citation>
    <scope>METHYLATION AT HIS-185</scope>
    <scope>MUTAGENESIS OF HIS-185</scope>
</reference>
<reference key="14">
    <citation type="journal article" date="2015" name="J. Virol.">
        <title>The endoplasmic reticulum membrane J protein C18 executes a distinct role in promoting simian virus 40 membrane penetration.</title>
        <authorList>
            <person name="Bagchi P."/>
            <person name="Walczak C.P."/>
            <person name="Tsai B."/>
        </authorList>
    </citation>
    <scope>SUBCELLULAR LOCATION (MICROBIAL INFECTION)</scope>
</reference>
<reference key="15">
    <citation type="submission" date="2005-11" db="PDB data bank">
        <title>Solution structure of J-domain from human DnaJ subfamily B member 12.</title>
        <authorList>
            <consortium name="RIKEN structural genomics initiative (RSGI)"/>
        </authorList>
    </citation>
    <scope>STRUCTURE BY NMR OF 110-174</scope>
</reference>
<sequence length="375" mass="41860">MESNKDEAERCISIALKAIQSNQPDRALRFLEKAQRLYPTPRVRALIESLNQKPQTAGDQPPPTDTTHATHRKAGGTDAPSANGEAGGESTKGYTAEQVAAVKRVKQCKDYYEILGVSRGASDEDLKKAYRRLALKFHPDKNHAPGATEAFKAIGTAYAVLSNPEKRKQYDQFGDDKSQAARHGHGHGDFHRGFEADISPEDLFNMFFGGGFPSSNVHVYSNGRMRYTYQQRQDRRDNQGDGGLGVFVQLMPILILILVSALSQLMVSSPPYSLSPRPSVGHIHRRVTDHLGVVYYVGDTFSEEYTGSSLKTVERNVEDDYIANLRNNCWKEKQQKEGLLYRARYFGDTDMYHRAQKMGTPSCSRLSEVQASLHG</sequence>
<dbReference type="EMBL" id="AK000034">
    <property type="protein sequence ID" value="BAA90896.1"/>
    <property type="molecule type" value="mRNA"/>
</dbReference>
<dbReference type="EMBL" id="AK025942">
    <property type="protein sequence ID" value="BAB15289.1"/>
    <property type="status" value="ALT_INIT"/>
    <property type="molecule type" value="mRNA"/>
</dbReference>
<dbReference type="EMBL" id="AK302071">
    <property type="protein sequence ID" value="BAH13619.1"/>
    <property type="status" value="ALT_INIT"/>
    <property type="molecule type" value="mRNA"/>
</dbReference>
<dbReference type="EMBL" id="AC091769">
    <property type="status" value="NOT_ANNOTATED_CDS"/>
    <property type="molecule type" value="Genomic_DNA"/>
</dbReference>
<dbReference type="EMBL" id="BC011812">
    <property type="protein sequence ID" value="AAH11812.2"/>
    <property type="molecule type" value="mRNA"/>
</dbReference>
<dbReference type="EMBL" id="BC064920">
    <property type="protein sequence ID" value="AAH64920.1"/>
    <property type="molecule type" value="mRNA"/>
</dbReference>
<dbReference type="CCDS" id="CCDS7316.3">
    <molecule id="Q9NXW2-1"/>
</dbReference>
<dbReference type="RefSeq" id="NP_001002762.3">
    <molecule id="Q9NXW2-1"/>
    <property type="nucleotide sequence ID" value="NM_001002762.5"/>
</dbReference>
<dbReference type="RefSeq" id="NP_001352009.1">
    <molecule id="Q9NXW2-2"/>
    <property type="nucleotide sequence ID" value="NM_001365080.3"/>
</dbReference>
<dbReference type="RefSeq" id="NP_001352010.1">
    <molecule id="Q9NXW2-1"/>
    <property type="nucleotide sequence ID" value="NM_001365081.3"/>
</dbReference>
<dbReference type="RefSeq" id="NP_060096.3">
    <molecule id="Q9NXW2-1"/>
    <property type="nucleotide sequence ID" value="NM_017626.4"/>
</dbReference>
<dbReference type="PDB" id="2CTP">
    <property type="method" value="NMR"/>
    <property type="chains" value="A=110-174"/>
</dbReference>
<dbReference type="PDBsum" id="2CTP"/>
<dbReference type="SMR" id="Q9NXW2"/>
<dbReference type="BioGRID" id="120150">
    <property type="interactions" value="190"/>
</dbReference>
<dbReference type="CORUM" id="Q9NXW2"/>
<dbReference type="FunCoup" id="Q9NXW2">
    <property type="interactions" value="2407"/>
</dbReference>
<dbReference type="IntAct" id="Q9NXW2">
    <property type="interactions" value="54"/>
</dbReference>
<dbReference type="MINT" id="Q9NXW2"/>
<dbReference type="STRING" id="9606.ENSP00000345575"/>
<dbReference type="TCDB" id="1.P.1.1.1">
    <property type="family name" value="the polyoma virus sv40 er penetration channel (vpec) family"/>
</dbReference>
<dbReference type="iPTMnet" id="Q9NXW2"/>
<dbReference type="PhosphoSitePlus" id="Q9NXW2"/>
<dbReference type="BioMuta" id="DNAJB12"/>
<dbReference type="DMDM" id="294862531"/>
<dbReference type="jPOST" id="Q9NXW2"/>
<dbReference type="MassIVE" id="Q9NXW2"/>
<dbReference type="PaxDb" id="9606-ENSP00000345575"/>
<dbReference type="PeptideAtlas" id="Q9NXW2"/>
<dbReference type="ProteomicsDB" id="83139">
    <molecule id="Q9NXW2-1"/>
</dbReference>
<dbReference type="ProteomicsDB" id="83140">
    <molecule id="Q9NXW2-2"/>
</dbReference>
<dbReference type="Pumba" id="Q9NXW2"/>
<dbReference type="Antibodypedia" id="2545">
    <property type="antibodies" value="176 antibodies from 25 providers"/>
</dbReference>
<dbReference type="DNASU" id="54788"/>
<dbReference type="Ensembl" id="ENST00000444643.8">
    <molecule id="Q9NXW2-1"/>
    <property type="protein sequence ID" value="ENSP00000403313.2"/>
    <property type="gene ID" value="ENSG00000148719.16"/>
</dbReference>
<dbReference type="GeneID" id="54788"/>
<dbReference type="KEGG" id="hsa:54788"/>
<dbReference type="MANE-Select" id="ENST00000444643.8">
    <property type="protein sequence ID" value="ENSP00000403313.2"/>
    <property type="RefSeq nucleotide sequence ID" value="NM_017626.7"/>
    <property type="RefSeq protein sequence ID" value="NP_060096.4"/>
</dbReference>
<dbReference type="UCSC" id="uc057tyc.1">
    <molecule id="Q9NXW2-1"/>
    <property type="organism name" value="human"/>
</dbReference>
<dbReference type="AGR" id="HGNC:14891"/>
<dbReference type="CTD" id="54788"/>
<dbReference type="DisGeNET" id="54788"/>
<dbReference type="GeneCards" id="DNAJB12"/>
<dbReference type="HGNC" id="HGNC:14891">
    <property type="gene designation" value="DNAJB12"/>
</dbReference>
<dbReference type="HPA" id="ENSG00000148719">
    <property type="expression patterns" value="Low tissue specificity"/>
</dbReference>
<dbReference type="MIM" id="608376">
    <property type="type" value="gene"/>
</dbReference>
<dbReference type="neXtProt" id="NX_Q9NXW2"/>
<dbReference type="OpenTargets" id="ENSG00000148719"/>
<dbReference type="PharmGKB" id="PA27414"/>
<dbReference type="VEuPathDB" id="HostDB:ENSG00000148719"/>
<dbReference type="eggNOG" id="KOG0714">
    <property type="taxonomic scope" value="Eukaryota"/>
</dbReference>
<dbReference type="GeneTree" id="ENSGT00940000155590"/>
<dbReference type="InParanoid" id="Q9NXW2"/>
<dbReference type="OrthoDB" id="442087at2759"/>
<dbReference type="PAN-GO" id="Q9NXW2">
    <property type="GO annotations" value="5 GO annotations based on evolutionary models"/>
</dbReference>
<dbReference type="PhylomeDB" id="Q9NXW2"/>
<dbReference type="PathwayCommons" id="Q9NXW2"/>
<dbReference type="SignaLink" id="Q9NXW2"/>
<dbReference type="SIGNOR" id="Q9NXW2"/>
<dbReference type="BioGRID-ORCS" id="54788">
    <property type="hits" value="65 hits in 1151 CRISPR screens"/>
</dbReference>
<dbReference type="ChiTaRS" id="DNAJB12">
    <property type="organism name" value="human"/>
</dbReference>
<dbReference type="EvolutionaryTrace" id="Q9NXW2"/>
<dbReference type="GenomeRNAi" id="54788"/>
<dbReference type="Pharos" id="Q9NXW2">
    <property type="development level" value="Tbio"/>
</dbReference>
<dbReference type="PRO" id="PR:Q9NXW2"/>
<dbReference type="Proteomes" id="UP000005640">
    <property type="component" value="Chromosome 10"/>
</dbReference>
<dbReference type="RNAct" id="Q9NXW2">
    <property type="molecule type" value="protein"/>
</dbReference>
<dbReference type="Bgee" id="ENSG00000148719">
    <property type="expression patterns" value="Expressed in tongue squamous epithelium and 208 other cell types or tissues"/>
</dbReference>
<dbReference type="ExpressionAtlas" id="Q9NXW2">
    <property type="expression patterns" value="baseline and differential"/>
</dbReference>
<dbReference type="GO" id="GO:0005783">
    <property type="term" value="C:endoplasmic reticulum"/>
    <property type="evidence" value="ECO:0000314"/>
    <property type="project" value="HPA"/>
</dbReference>
<dbReference type="GO" id="GO:0005789">
    <property type="term" value="C:endoplasmic reticulum membrane"/>
    <property type="evidence" value="ECO:0000314"/>
    <property type="project" value="UniProtKB"/>
</dbReference>
<dbReference type="GO" id="GO:0016020">
    <property type="term" value="C:membrane"/>
    <property type="evidence" value="ECO:0007005"/>
    <property type="project" value="UniProtKB"/>
</dbReference>
<dbReference type="GO" id="GO:0031965">
    <property type="term" value="C:nuclear membrane"/>
    <property type="evidence" value="ECO:0000314"/>
    <property type="project" value="HPA"/>
</dbReference>
<dbReference type="GO" id="GO:0030544">
    <property type="term" value="F:Hsp70 protein binding"/>
    <property type="evidence" value="ECO:0000353"/>
    <property type="project" value="UniProtKB"/>
</dbReference>
<dbReference type="GO" id="GO:0071218">
    <property type="term" value="P:cellular response to misfolded protein"/>
    <property type="evidence" value="ECO:0000314"/>
    <property type="project" value="UniProtKB"/>
</dbReference>
<dbReference type="GO" id="GO:0051085">
    <property type="term" value="P:chaperone cofactor-dependent protein refolding"/>
    <property type="evidence" value="ECO:0000314"/>
    <property type="project" value="UniProtKB"/>
</dbReference>
<dbReference type="GO" id="GO:0036503">
    <property type="term" value="P:ERAD pathway"/>
    <property type="evidence" value="ECO:0000314"/>
    <property type="project" value="UniProtKB"/>
</dbReference>
<dbReference type="GO" id="GO:0065003">
    <property type="term" value="P:protein-containing complex assembly"/>
    <property type="evidence" value="ECO:0000314"/>
    <property type="project" value="UniProtKB"/>
</dbReference>
<dbReference type="CDD" id="cd06257">
    <property type="entry name" value="DnaJ"/>
    <property type="match status" value="1"/>
</dbReference>
<dbReference type="FunFam" id="1.10.287.110:FF:000004">
    <property type="entry name" value="DnaJ (Hsp40) homolog, subfamily B, member 14"/>
    <property type="match status" value="1"/>
</dbReference>
<dbReference type="Gene3D" id="1.10.287.110">
    <property type="entry name" value="DnaJ domain"/>
    <property type="match status" value="1"/>
</dbReference>
<dbReference type="InterPro" id="IPR001623">
    <property type="entry name" value="DnaJ_domain"/>
</dbReference>
<dbReference type="InterPro" id="IPR018253">
    <property type="entry name" value="DnaJ_domain_CS"/>
</dbReference>
<dbReference type="InterPro" id="IPR051100">
    <property type="entry name" value="DnaJ_subfamily_B/C"/>
</dbReference>
<dbReference type="InterPro" id="IPR015399">
    <property type="entry name" value="DUF1977_DnaJ-like"/>
</dbReference>
<dbReference type="InterPro" id="IPR036869">
    <property type="entry name" value="J_dom_sf"/>
</dbReference>
<dbReference type="PANTHER" id="PTHR43908">
    <property type="entry name" value="AT29763P-RELATED"/>
    <property type="match status" value="1"/>
</dbReference>
<dbReference type="PANTHER" id="PTHR43908:SF8">
    <property type="entry name" value="DNAJ HOMOLOG SUBFAMILY B MEMBER 12"/>
    <property type="match status" value="1"/>
</dbReference>
<dbReference type="Pfam" id="PF00226">
    <property type="entry name" value="DnaJ"/>
    <property type="match status" value="1"/>
</dbReference>
<dbReference type="Pfam" id="PF09320">
    <property type="entry name" value="DUF1977"/>
    <property type="match status" value="1"/>
</dbReference>
<dbReference type="PRINTS" id="PR00625">
    <property type="entry name" value="JDOMAIN"/>
</dbReference>
<dbReference type="SMART" id="SM00271">
    <property type="entry name" value="DnaJ"/>
    <property type="match status" value="1"/>
</dbReference>
<dbReference type="SUPFAM" id="SSF46565">
    <property type="entry name" value="Chaperone J-domain"/>
    <property type="match status" value="1"/>
</dbReference>
<dbReference type="PROSITE" id="PS00636">
    <property type="entry name" value="DNAJ_1"/>
    <property type="match status" value="1"/>
</dbReference>
<dbReference type="PROSITE" id="PS50076">
    <property type="entry name" value="DNAJ_2"/>
    <property type="match status" value="1"/>
</dbReference>
<proteinExistence type="evidence at protein level"/>
<name>DJB12_HUMAN</name>
<keyword id="KW-0002">3D-structure</keyword>
<keyword id="KW-0007">Acetylation</keyword>
<keyword id="KW-0025">Alternative splicing</keyword>
<keyword id="KW-0143">Chaperone</keyword>
<keyword id="KW-0256">Endoplasmic reticulum</keyword>
<keyword id="KW-0945">Host-virus interaction</keyword>
<keyword id="KW-0472">Membrane</keyword>
<keyword id="KW-0488">Methylation</keyword>
<keyword id="KW-0539">Nucleus</keyword>
<keyword id="KW-1267">Proteomics identification</keyword>
<keyword id="KW-1185">Reference proteome</keyword>
<keyword id="KW-0812">Transmembrane</keyword>
<keyword id="KW-1133">Transmembrane helix</keyword>
<evidence type="ECO:0000255" key="1"/>
<evidence type="ECO:0000255" key="2">
    <source>
        <dbReference type="PROSITE-ProRule" id="PRU00286"/>
    </source>
</evidence>
<evidence type="ECO:0000256" key="3">
    <source>
        <dbReference type="SAM" id="MobiDB-lite"/>
    </source>
</evidence>
<evidence type="ECO:0000269" key="4">
    <source>
    </source>
</evidence>
<evidence type="ECO:0000269" key="5">
    <source>
    </source>
</evidence>
<evidence type="ECO:0000269" key="6">
    <source>
    </source>
</evidence>
<evidence type="ECO:0000269" key="7">
    <source>
    </source>
</evidence>
<evidence type="ECO:0000269" key="8">
    <source>
    </source>
</evidence>
<evidence type="ECO:0000269" key="9">
    <source>
    </source>
</evidence>
<evidence type="ECO:0000269" key="10">
    <source>
    </source>
</evidence>
<evidence type="ECO:0000269" key="11">
    <source>
    </source>
</evidence>
<evidence type="ECO:0000303" key="12">
    <source>
    </source>
</evidence>
<evidence type="ECO:0000303" key="13">
    <source>
    </source>
</evidence>
<evidence type="ECO:0000305" key="14"/>
<evidence type="ECO:0000305" key="15">
    <source>
    </source>
</evidence>
<evidence type="ECO:0000305" key="16">
    <source>
    </source>
</evidence>
<evidence type="ECO:0000305" key="17">
    <source>
    </source>
</evidence>
<evidence type="ECO:0000312" key="18">
    <source>
        <dbReference type="HGNC" id="HGNC:14891"/>
    </source>
</evidence>
<evidence type="ECO:0007744" key="19">
    <source>
    </source>
</evidence>
<evidence type="ECO:0007829" key="20">
    <source>
        <dbReference type="PDB" id="2CTP"/>
    </source>
</evidence>
<feature type="chain" id="PRO_0000071037" description="DnaJ homolog subfamily B member 12">
    <location>
        <begin position="1"/>
        <end position="375"/>
    </location>
</feature>
<feature type="topological domain" description="Cytoplasmic" evidence="15 16">
    <location>
        <begin position="1"/>
        <end position="243"/>
    </location>
</feature>
<feature type="transmembrane region" description="Helical" evidence="1">
    <location>
        <begin position="244"/>
        <end position="264"/>
    </location>
</feature>
<feature type="topological domain" description="Lumenal" evidence="15 16">
    <location>
        <begin position="265"/>
        <end position="375"/>
    </location>
</feature>
<feature type="domain" description="J" evidence="2">
    <location>
        <begin position="112"/>
        <end position="176"/>
    </location>
</feature>
<feature type="region of interest" description="Disordered" evidence="3">
    <location>
        <begin position="45"/>
        <end position="92"/>
    </location>
</feature>
<feature type="compositionally biased region" description="Polar residues" evidence="3">
    <location>
        <begin position="49"/>
        <end position="58"/>
    </location>
</feature>
<feature type="modified residue" description="N-acetylmethionine" evidence="19">
    <location>
        <position position="1"/>
    </location>
</feature>
<feature type="modified residue" description="Pros-methylhistidine" evidence="17">
    <location>
        <position position="185"/>
    </location>
</feature>
<feature type="splice variant" id="VSP_039040" description="In isoform 2." evidence="12">
    <original>VQASLHG</original>
    <variation>TMKSLENFW</variation>
    <location>
        <begin position="369"/>
        <end position="375"/>
    </location>
</feature>
<feature type="sequence variant" id="VAR_017864" description="In dbSNP:rs3750784.">
    <original>E</original>
    <variation>K</variation>
    <location>
        <position position="304"/>
    </location>
</feature>
<feature type="mutagenesis site" description="Abolishes interaction with HSPA8/Hsc70." evidence="4 5 8">
    <original>H</original>
    <variation>Q</variation>
    <location>
        <position position="138"/>
    </location>
</feature>
<feature type="mutagenesis site" description="In delta(G/F); impaired ability to form tetramers and impaired ability to promote potassium channel assembly into tetramers." evidence="10">
    <location>
        <begin position="184"/>
        <end position="212"/>
    </location>
</feature>
<feature type="mutagenesis site" description="Abolished histidine methylation by METTL9." evidence="11">
    <original>H</original>
    <variation>R</variation>
    <location>
        <position position="185"/>
    </location>
</feature>
<feature type="sequence conflict" description="In Ref. 1; BAA90896." evidence="14" ref="1">
    <original>T</original>
    <variation>S</variation>
    <location>
        <position position="70"/>
    </location>
</feature>
<feature type="sequence conflict" description="In Ref. 1; BAA90896." evidence="14" ref="1">
    <original>F</original>
    <variation>S</variation>
    <location>
        <position position="212"/>
    </location>
</feature>
<feature type="sequence conflict" description="In Ref. 1; BAH13619." evidence="14" ref="1">
    <original>S</original>
    <variation>G</variation>
    <location>
        <position position="215"/>
    </location>
</feature>
<feature type="helix" evidence="20">
    <location>
        <begin position="111"/>
        <end position="115"/>
    </location>
</feature>
<feature type="helix" evidence="20">
    <location>
        <begin position="123"/>
        <end position="134"/>
    </location>
</feature>
<feature type="turn" evidence="20">
    <location>
        <begin position="139"/>
        <end position="141"/>
    </location>
</feature>
<feature type="helix" evidence="20">
    <location>
        <begin position="145"/>
        <end position="161"/>
    </location>
</feature>
<feature type="helix" evidence="20">
    <location>
        <begin position="164"/>
        <end position="172"/>
    </location>
</feature>
<comment type="function">
    <text evidence="4 5 8 10">Acts as a co-chaperone with HSPA8/Hsc70; required to promote protein folding and trafficking, prevent aggregation of client proteins, and promote unfolded proteins to endoplasmic reticulum-associated degradation (ERAD) pathway (PubMed:21148293, PubMed:21150129). Acts by determining HSPA8/Hsc70's ATPase and polypeptide-binding activities (PubMed:21148293). Can also act independently of HSPA8/Hsc70: together with DNAJB14, acts as a chaperone that promotes maturation of potassium channels KCND2 and KCNH2 by stabilizing nascent channel subunits and assembling them into tetramers (PubMed:27916661). While stabilization of nascent channel proteins is dependent on HSPA8/Hsc70, the process of oligomerization of channel subunits is independent of HSPA8/Hsc70 (PubMed:27916661). When overexpressed, forms membranous structures together with DNAJB14 and HSPA8/Hsc70 within the nucleus; the role of these structures, named DJANGOs, is still unclear (PubMed:24732912).</text>
</comment>
<comment type="function">
    <text evidence="6 7">(Microbial infection) In case of infection by polyomavirus, involved in the virus endoplasmic reticulum membrane penetration and infection (PubMed:21673190, PubMed:24675744).</text>
</comment>
<comment type="subunit">
    <text evidence="4 5 7 8 10">Homodimer and homotetramer (PubMed:27916661). Interacts (via J domain) with HSPA8/Hsc70 (PubMed:21148293, PubMed:21150129, PubMed:24732912, PubMed:27916661). Forms a multiprotein complex, at least composed of DNAJB12, DNAJB14, HSPA8/Hsc70 and SGTA; interaction with DNAJB14 and HSPA8/Hsc70 is direct (PubMed:24675744).</text>
</comment>
<comment type="subcellular location">
    <subcellularLocation>
        <location evidence="4 5 8 10">Endoplasmic reticulum membrane</location>
        <topology evidence="1">Single-pass membrane protein</topology>
    </subcellularLocation>
    <subcellularLocation>
        <location evidence="8">Nucleus membrane</location>
        <topology evidence="14">Single-pass membrane protein</topology>
    </subcellularLocation>
    <text evidence="4 5 8 10">Localizes to the endoplasmic reticulum membrane (PubMed:21148293, PubMed:21150129, PubMed:24732912, PubMed:27916661). When overexpressed, forms membranous structures in the nucleus (PubMed:24732912).</text>
</comment>
<comment type="subcellular location">
    <text evidence="9">(Microbial infection) Upon SV40 infection, colocalizes with BCAP31, DNAJC18 and DNAJB14 in punctate structures within the endoplasmic reticulum membrane.</text>
</comment>
<comment type="alternative products">
    <event type="alternative splicing"/>
    <isoform>
        <id>Q9NXW2-1</id>
        <name>1</name>
        <sequence type="displayed"/>
    </isoform>
    <isoform>
        <id>Q9NXW2-2</id>
        <name>2</name>
        <sequence type="described" ref="VSP_039040"/>
    </isoform>
</comment>
<comment type="PTM">
    <text evidence="17">Methylated at His-185 by METTL9.</text>
</comment>
<comment type="similarity">
    <text evidence="14">Belongs to the DnaJ family. DNAJB12/DNAJB14 subfamily.</text>
</comment>
<comment type="sequence caution" evidence="14">
    <conflict type="erroneous initiation">
        <sequence resource="EMBL-CDS" id="BAB15289"/>
    </conflict>
    <text>Truncated N-terminus.</text>
</comment>
<comment type="sequence caution" evidence="14">
    <conflict type="erroneous initiation">
        <sequence resource="EMBL-CDS" id="BAH13619"/>
    </conflict>
    <text>Truncated N-terminus.</text>
</comment>
<accession>Q9NXW2</accession>
<accession>B7Z7I3</accession>
<accession>Q9H6H0</accession>
<gene>
    <name evidence="13 18" type="primary">DNAJB12</name>
</gene>
<protein>
    <recommendedName>
        <fullName evidence="13">DnaJ homolog subfamily B member 12</fullName>
    </recommendedName>
</protein>
<organism>
    <name type="scientific">Homo sapiens</name>
    <name type="common">Human</name>
    <dbReference type="NCBI Taxonomy" id="9606"/>
    <lineage>
        <taxon>Eukaryota</taxon>
        <taxon>Metazoa</taxon>
        <taxon>Chordata</taxon>
        <taxon>Craniata</taxon>
        <taxon>Vertebrata</taxon>
        <taxon>Euteleostomi</taxon>
        <taxon>Mammalia</taxon>
        <taxon>Eutheria</taxon>
        <taxon>Euarchontoglires</taxon>
        <taxon>Primates</taxon>
        <taxon>Haplorrhini</taxon>
        <taxon>Catarrhini</taxon>
        <taxon>Hominidae</taxon>
        <taxon>Homo</taxon>
    </lineage>
</organism>